<protein>
    <recommendedName>
        <fullName>Sterol O-acyltransferase 1</fullName>
        <ecNumber evidence="1">2.3.1.26</ecNumber>
    </recommendedName>
    <alternativeName>
        <fullName>Acyl-coenzyme A:cholesterol acyltransferase 1</fullName>
        <shortName>ACAT-1</shortName>
    </alternativeName>
    <alternativeName>
        <fullName>Cholesterol acyltransferase 1</fullName>
    </alternativeName>
</protein>
<reference key="1">
    <citation type="journal article" date="1998" name="J. Biol. Chem.">
        <title>Identification of a form of acyl-CoA:cholesterol acyltransferase specific to liver and intestine in nonhuman primates.</title>
        <authorList>
            <person name="Anderson R.A."/>
            <person name="Joyce C."/>
            <person name="Davis M."/>
            <person name="Reagan J.W."/>
            <person name="Clark M."/>
            <person name="Shelness G.S."/>
            <person name="Rudel L.L."/>
        </authorList>
    </citation>
    <scope>NUCLEOTIDE SEQUENCE [MRNA]</scope>
    <source>
        <tissue>Adrenal gland</tissue>
    </source>
</reference>
<evidence type="ECO:0000250" key="1">
    <source>
        <dbReference type="UniProtKB" id="P35610"/>
    </source>
</evidence>
<evidence type="ECO:0000256" key="2">
    <source>
        <dbReference type="SAM" id="MobiDB-lite"/>
    </source>
</evidence>
<evidence type="ECO:0000305" key="3"/>
<keyword id="KW-0007">Acetylation</keyword>
<keyword id="KW-0012">Acyltransferase</keyword>
<keyword id="KW-0153">Cholesterol metabolism</keyword>
<keyword id="KW-1015">Disulfide bond</keyword>
<keyword id="KW-0256">Endoplasmic reticulum</keyword>
<keyword id="KW-0443">Lipid metabolism</keyword>
<keyword id="KW-0472">Membrane</keyword>
<keyword id="KW-0597">Phosphoprotein</keyword>
<keyword id="KW-0753">Steroid metabolism</keyword>
<keyword id="KW-1207">Sterol metabolism</keyword>
<keyword id="KW-0808">Transferase</keyword>
<keyword id="KW-0812">Transmembrane</keyword>
<keyword id="KW-1133">Transmembrane helix</keyword>
<accession>O77760</accession>
<organism>
    <name type="scientific">Chlorocebus aethiops</name>
    <name type="common">Green monkey</name>
    <name type="synonym">Cercopithecus aethiops</name>
    <dbReference type="NCBI Taxonomy" id="9534"/>
    <lineage>
        <taxon>Eukaryota</taxon>
        <taxon>Metazoa</taxon>
        <taxon>Chordata</taxon>
        <taxon>Craniata</taxon>
        <taxon>Vertebrata</taxon>
        <taxon>Euteleostomi</taxon>
        <taxon>Mammalia</taxon>
        <taxon>Eutheria</taxon>
        <taxon>Euarchontoglires</taxon>
        <taxon>Primates</taxon>
        <taxon>Haplorrhini</taxon>
        <taxon>Catarrhini</taxon>
        <taxon>Cercopithecidae</taxon>
        <taxon>Cercopithecinae</taxon>
        <taxon>Chlorocebus</taxon>
    </lineage>
</organism>
<name>SOAT1_CHLAE</name>
<feature type="chain" id="PRO_0000207638" description="Sterol O-acyltransferase 1">
    <location>
        <begin position="1"/>
        <end position="550"/>
    </location>
</feature>
<feature type="topological domain" description="Cytoplasmic" evidence="3">
    <location>
        <begin position="1"/>
        <end position="138"/>
    </location>
</feature>
<feature type="transmembrane region" description="Helical; Name=1" evidence="1">
    <location>
        <begin position="139"/>
        <end position="160"/>
    </location>
</feature>
<feature type="topological domain" description="Lumenal" evidence="3">
    <location>
        <begin position="161"/>
        <end position="180"/>
    </location>
</feature>
<feature type="transmembrane region" description="Helical; Name=2" evidence="1">
    <location>
        <begin position="181"/>
        <end position="206"/>
    </location>
</feature>
<feature type="topological domain" description="Cytoplasmic" evidence="3">
    <location>
        <begin position="207"/>
        <end position="218"/>
    </location>
</feature>
<feature type="transmembrane region" description="Helical; Name=3" evidence="1">
    <location>
        <begin position="219"/>
        <end position="244"/>
    </location>
</feature>
<feature type="topological domain" description="Lumenal" evidence="3">
    <location>
        <begin position="245"/>
        <end position="252"/>
    </location>
</feature>
<feature type="transmembrane region" description="Helical; Name=4" evidence="1">
    <location>
        <begin position="253"/>
        <end position="276"/>
    </location>
</feature>
<feature type="topological domain" description="Cytoplasmic" evidence="3">
    <location>
        <begin position="277"/>
        <end position="319"/>
    </location>
</feature>
<feature type="transmembrane region" description="Helical; Name=5" evidence="1">
    <location>
        <begin position="320"/>
        <end position="352"/>
    </location>
</feature>
<feature type="topological domain" description="Lumenal" evidence="3">
    <location>
        <begin position="353"/>
        <end position="369"/>
    </location>
</feature>
<feature type="transmembrane region" description="Helical; Name=6" evidence="1">
    <location>
        <begin position="370"/>
        <end position="395"/>
    </location>
</feature>
<feature type="topological domain" description="Cytoplasmic" evidence="3">
    <location>
        <begin position="396"/>
        <end position="443"/>
    </location>
</feature>
<feature type="transmembrane region" description="Helical; Name=7" evidence="1">
    <location>
        <begin position="444"/>
        <end position="468"/>
    </location>
</feature>
<feature type="topological domain" description="Lumenal" evidence="3">
    <location>
        <begin position="469"/>
        <end position="474"/>
    </location>
</feature>
<feature type="transmembrane region" description="Helical; Name=8" evidence="1">
    <location>
        <begin position="475"/>
        <end position="490"/>
    </location>
</feature>
<feature type="topological domain" description="Cytoplasmic" evidence="3">
    <location>
        <begin position="491"/>
        <end position="496"/>
    </location>
</feature>
<feature type="transmembrane region" description="Helical; Name=9" evidence="1">
    <location>
        <begin position="497"/>
        <end position="528"/>
    </location>
</feature>
<feature type="topological domain" description="Lumenal" evidence="3">
    <location>
        <begin position="529"/>
        <end position="550"/>
    </location>
</feature>
<feature type="region of interest" description="Disordered" evidence="2">
    <location>
        <begin position="1"/>
        <end position="36"/>
    </location>
</feature>
<feature type="short sequence motif" description="FYXDWWN motif" evidence="1">
    <location>
        <begin position="403"/>
        <end position="409"/>
    </location>
</feature>
<feature type="compositionally biased region" description="Basic and acidic residues" evidence="2">
    <location>
        <begin position="15"/>
        <end position="34"/>
    </location>
</feature>
<feature type="active site" evidence="1">
    <location>
        <position position="460"/>
    </location>
</feature>
<feature type="binding site" evidence="1">
    <location>
        <position position="137"/>
    </location>
    <ligand>
        <name>cholesterol</name>
        <dbReference type="ChEBI" id="CHEBI:16113"/>
    </ligand>
</feature>
<feature type="binding site" evidence="1">
    <location>
        <position position="415"/>
    </location>
    <ligand>
        <name>an acyl-CoA</name>
        <dbReference type="ChEBI" id="CHEBI:58342"/>
    </ligand>
</feature>
<feature type="binding site" evidence="1">
    <location>
        <position position="418"/>
    </location>
    <ligand>
        <name>an acyl-CoA</name>
        <dbReference type="ChEBI" id="CHEBI:58342"/>
    </ligand>
</feature>
<feature type="binding site" evidence="1">
    <location>
        <position position="421"/>
    </location>
    <ligand>
        <name>an acyl-CoA</name>
        <dbReference type="ChEBI" id="CHEBI:58342"/>
    </ligand>
</feature>
<feature type="binding site" evidence="1">
    <location>
        <position position="425"/>
    </location>
    <ligand>
        <name>an acyl-CoA</name>
        <dbReference type="ChEBI" id="CHEBI:58342"/>
    </ligand>
</feature>
<feature type="binding site" evidence="1">
    <location>
        <position position="433"/>
    </location>
    <ligand>
        <name>an acyl-CoA</name>
        <dbReference type="ChEBI" id="CHEBI:58342"/>
    </ligand>
</feature>
<feature type="binding site" evidence="1">
    <location>
        <position position="445"/>
    </location>
    <ligand>
        <name>an acyl-CoA</name>
        <dbReference type="ChEBI" id="CHEBI:58342"/>
    </ligand>
</feature>
<feature type="binding site" evidence="1">
    <location>
        <position position="456"/>
    </location>
    <ligand>
        <name>an acyl-CoA</name>
        <dbReference type="ChEBI" id="CHEBI:58342"/>
    </ligand>
</feature>
<feature type="modified residue" description="N-acetylmethionine" evidence="1">
    <location>
        <position position="1"/>
    </location>
</feature>
<feature type="modified residue" description="Phosphoserine" evidence="1">
    <location>
        <position position="8"/>
    </location>
</feature>
<feature type="disulfide bond" evidence="1">
    <location>
        <begin position="528"/>
        <end position="546"/>
    </location>
</feature>
<proteinExistence type="evidence at transcript level"/>
<sequence length="550" mass="64728">MVGEEKMSLRNRLSKSRENPEEDEDQRKPAKESLEAPSNGRIDIKQLIAKKIKLTAEAEELKPFFMKEVGSHFDDFVTNLIEKSASLDNGGCALTTFSILEGEKNNHRAKDLRAPPEQGKIFIARRSLLDELLEVDHIRTIYHMFIALLILFILSTLVVDYIDEGRLVLEFSLLSYAFGKFPTVVWTWWIMFLSTFSVPYFLFQRWATGYSKSSHPLINSLFHGFLFMVFQIGILGFGPTYVVLAYTLPPASRFIIIFEQIRFVMKAHSFVRENVPRVLNSAKEKSSTVPIPTVNQYLYFLFAPTLIYRDSYPRNPTVRWGYVAMQFAQVFGCFFYVYYIFERLCAPLFRNIKQEPFSARVLVLCVFNSILPGVLILFLTFFAFLHCWLNAFAEMLRFGDRMFYKDWWNSTSYSNYYRTWNVVVHDWLYYYAYKDFLWFFSKRFKSAAMLAVFAVSAVVHEYALAVCLSFFYPVLFVLFMFFGMAFNFIVNDSRKKPIWNVMMWTSLFLGNGVLLCFYSQEWYARQHCPLKNPTFLDYVRPRSWTCRYVF</sequence>
<comment type="function">
    <text evidence="1">Catalyzes the formation of fatty acid-cholesterol esters, which are less soluble in membranes than cholesterol. Plays a role in lipoprotein assembly and dietary cholesterol absorption. Preferentially utilizes oleoyl-CoA ((9Z)-octadecenoyl-CoA) as a substrate: shows a higher activity towards an acyl-CoA substrate with a double bond at the delta-9 position (9Z) than towards saturated acyl-CoA or an unsaturated acyl-CoA with a double bond at the delta-7 (7Z) or delta-11 (11Z) positions.</text>
</comment>
<comment type="catalytic activity">
    <reaction evidence="1">
        <text>a sterol + a long-chain fatty acyl-CoA = a long-chain 3-hydroxysterol ester + CoA</text>
        <dbReference type="Rhea" id="RHEA:59816"/>
        <dbReference type="ChEBI" id="CHEBI:15889"/>
        <dbReference type="ChEBI" id="CHEBI:57287"/>
        <dbReference type="ChEBI" id="CHEBI:83139"/>
        <dbReference type="ChEBI" id="CHEBI:232093"/>
        <dbReference type="EC" id="2.3.1.26"/>
    </reaction>
    <physiologicalReaction direction="left-to-right" evidence="1">
        <dbReference type="Rhea" id="RHEA:59817"/>
    </physiologicalReaction>
</comment>
<comment type="catalytic activity">
    <reaction evidence="1">
        <text>cholesterol + an acyl-CoA = a cholesterol ester + CoA</text>
        <dbReference type="Rhea" id="RHEA:17729"/>
        <dbReference type="ChEBI" id="CHEBI:16113"/>
        <dbReference type="ChEBI" id="CHEBI:17002"/>
        <dbReference type="ChEBI" id="CHEBI:57287"/>
        <dbReference type="ChEBI" id="CHEBI:58342"/>
    </reaction>
    <physiologicalReaction direction="left-to-right" evidence="1">
        <dbReference type="Rhea" id="RHEA:17730"/>
    </physiologicalReaction>
</comment>
<comment type="catalytic activity">
    <reaction evidence="1">
        <text>cholesterol + (9Z)-octadecenoyl-CoA = cholesteryl (9Z-octadecenoate) + CoA</text>
        <dbReference type="Rhea" id="RHEA:41436"/>
        <dbReference type="ChEBI" id="CHEBI:16113"/>
        <dbReference type="ChEBI" id="CHEBI:46898"/>
        <dbReference type="ChEBI" id="CHEBI:57287"/>
        <dbReference type="ChEBI" id="CHEBI:57387"/>
    </reaction>
    <physiologicalReaction direction="left-to-right" evidence="1">
        <dbReference type="Rhea" id="RHEA:41437"/>
    </physiologicalReaction>
</comment>
<comment type="catalytic activity">
    <reaction evidence="1">
        <text>cholesterol + hexadecanoyl-CoA = cholesteryl hexadecanoate + CoA</text>
        <dbReference type="Rhea" id="RHEA:42792"/>
        <dbReference type="ChEBI" id="CHEBI:3663"/>
        <dbReference type="ChEBI" id="CHEBI:16113"/>
        <dbReference type="ChEBI" id="CHEBI:57287"/>
        <dbReference type="ChEBI" id="CHEBI:57379"/>
    </reaction>
    <physiologicalReaction direction="left-to-right" evidence="1">
        <dbReference type="Rhea" id="RHEA:42793"/>
    </physiologicalReaction>
</comment>
<comment type="catalytic activity">
    <reaction evidence="1">
        <text>octadecanoyl-CoA + cholesterol = cholesteryl octadecanoate + CoA</text>
        <dbReference type="Rhea" id="RHEA:42812"/>
        <dbReference type="ChEBI" id="CHEBI:16113"/>
        <dbReference type="ChEBI" id="CHEBI:57287"/>
        <dbReference type="ChEBI" id="CHEBI:57394"/>
        <dbReference type="ChEBI" id="CHEBI:82750"/>
    </reaction>
    <physiologicalReaction direction="left-to-right" evidence="1">
        <dbReference type="Rhea" id="RHEA:42813"/>
    </physiologicalReaction>
</comment>
<comment type="catalytic activity">
    <reaction evidence="1">
        <text>(9Z,12Z)-octadecadienoyl-CoA + cholesterol = cholesteryl (9Z,12Z)-octadecadienoate + CoA</text>
        <dbReference type="Rhea" id="RHEA:42796"/>
        <dbReference type="ChEBI" id="CHEBI:16113"/>
        <dbReference type="ChEBI" id="CHEBI:41509"/>
        <dbReference type="ChEBI" id="CHEBI:57287"/>
        <dbReference type="ChEBI" id="CHEBI:57383"/>
    </reaction>
    <physiologicalReaction direction="left-to-right" evidence="1">
        <dbReference type="Rhea" id="RHEA:42797"/>
    </physiologicalReaction>
</comment>
<comment type="catalytic activity">
    <reaction evidence="1">
        <text>(5Z,8Z,11Z,14Z)-eicosatetraenoyl-CoA + cholesterol = cholesteryl (5Z,8Z,11Z,14Z)-eicosatetraenoate + CoA</text>
        <dbReference type="Rhea" id="RHEA:42816"/>
        <dbReference type="ChEBI" id="CHEBI:16113"/>
        <dbReference type="ChEBI" id="CHEBI:57287"/>
        <dbReference type="ChEBI" id="CHEBI:57368"/>
        <dbReference type="ChEBI" id="CHEBI:82751"/>
    </reaction>
    <physiologicalReaction direction="left-to-right" evidence="1">
        <dbReference type="Rhea" id="RHEA:42817"/>
    </physiologicalReaction>
</comment>
<comment type="catalytic activity">
    <reaction evidence="1">
        <text>(9Z)-hexadecenoyl-CoA + cholesterol = cholesteryl (9Z)-hexadecenoate + CoA</text>
        <dbReference type="Rhea" id="RHEA:64320"/>
        <dbReference type="ChEBI" id="CHEBI:16113"/>
        <dbReference type="ChEBI" id="CHEBI:57287"/>
        <dbReference type="ChEBI" id="CHEBI:61540"/>
        <dbReference type="ChEBI" id="CHEBI:84323"/>
    </reaction>
    <physiologicalReaction direction="left-to-right" evidence="1">
        <dbReference type="Rhea" id="RHEA:64321"/>
    </physiologicalReaction>
</comment>
<comment type="catalytic activity">
    <reaction evidence="1">
        <text>(11Z)-octadecenoyl-CoA + cholesterol = cholesteryl (11Z)-octadecenoate + CoA</text>
        <dbReference type="Rhea" id="RHEA:64324"/>
        <dbReference type="ChEBI" id="CHEBI:16113"/>
        <dbReference type="ChEBI" id="CHEBI:57287"/>
        <dbReference type="ChEBI" id="CHEBI:75121"/>
        <dbReference type="ChEBI" id="CHEBI:88768"/>
    </reaction>
    <physiologicalReaction direction="left-to-right" evidence="1">
        <dbReference type="Rhea" id="RHEA:64325"/>
    </physiologicalReaction>
</comment>
<comment type="catalytic activity">
    <reaction evidence="1">
        <text>(7Z)-octadecenoyl-CoA + cholesterol = cholesteryl (7Z)-octadecenoate + CoA</text>
        <dbReference type="Rhea" id="RHEA:64328"/>
        <dbReference type="ChEBI" id="CHEBI:16113"/>
        <dbReference type="ChEBI" id="CHEBI:57287"/>
        <dbReference type="ChEBI" id="CHEBI:152049"/>
        <dbReference type="ChEBI" id="CHEBI:152050"/>
    </reaction>
    <physiologicalReaction direction="left-to-right" evidence="1">
        <dbReference type="Rhea" id="RHEA:64329"/>
    </physiologicalReaction>
</comment>
<comment type="subunit">
    <text evidence="1">May form homo- or heterodimers. Interacts with UBIAD1.</text>
</comment>
<comment type="subcellular location">
    <subcellularLocation>
        <location evidence="1">Endoplasmic reticulum membrane</location>
        <topology evidence="1">Multi-pass membrane protein</topology>
    </subcellularLocation>
</comment>
<comment type="tissue specificity">
    <text>Expressed in most tissues, but most strongly in the adrenal gland. Expressed more strongly in liver Kupffer cells than in hepatocytes.</text>
</comment>
<comment type="domain">
    <text evidence="1">Each protomer consists of 9 transmembrane segments, which enclose a cytosolic tunnel and a transmembrane tunnel that converge at the predicted catalytic site: acyl-CoA enters the active site through the cytosolic tunnel, whereas cholesterol enters from the side through the transmembrane tunnel.</text>
</comment>
<comment type="similarity">
    <text evidence="3">Belongs to the membrane-bound acyltransferase family. Sterol o-acyltransferase subfamily.</text>
</comment>
<gene>
    <name type="primary">SOAT1</name>
    <name type="synonym">ACAT1</name>
</gene>
<dbReference type="EC" id="2.3.1.26" evidence="1"/>
<dbReference type="EMBL" id="AF053336">
    <property type="protein sequence ID" value="AAC62930.1"/>
    <property type="molecule type" value="mRNA"/>
</dbReference>
<dbReference type="SMR" id="O77760"/>
<dbReference type="BindingDB" id="O77760"/>
<dbReference type="ChEMBL" id="CHEMBL3879850"/>
<dbReference type="BRENDA" id="2.3.1.26">
    <property type="organism ID" value="175"/>
</dbReference>
<dbReference type="GO" id="GO:0005789">
    <property type="term" value="C:endoplasmic reticulum membrane"/>
    <property type="evidence" value="ECO:0007669"/>
    <property type="project" value="UniProtKB-SubCell"/>
</dbReference>
<dbReference type="GO" id="GO:0015485">
    <property type="term" value="F:cholesterol binding"/>
    <property type="evidence" value="ECO:0000250"/>
    <property type="project" value="UniProtKB"/>
</dbReference>
<dbReference type="GO" id="GO:0034736">
    <property type="term" value="F:cholesterol O-acyltransferase activity"/>
    <property type="evidence" value="ECO:0000250"/>
    <property type="project" value="UniProtKB"/>
</dbReference>
<dbReference type="GO" id="GO:0000062">
    <property type="term" value="F:fatty-acyl-CoA binding"/>
    <property type="evidence" value="ECO:0007669"/>
    <property type="project" value="TreeGrafter"/>
</dbReference>
<dbReference type="GO" id="GO:0004772">
    <property type="term" value="F:sterol O-acyltransferase activity"/>
    <property type="evidence" value="ECO:0000314"/>
    <property type="project" value="UniProtKB"/>
</dbReference>
<dbReference type="GO" id="GO:0033344">
    <property type="term" value="P:cholesterol efflux"/>
    <property type="evidence" value="ECO:0007669"/>
    <property type="project" value="TreeGrafter"/>
</dbReference>
<dbReference type="GO" id="GO:0042632">
    <property type="term" value="P:cholesterol homeostasis"/>
    <property type="evidence" value="ECO:0007669"/>
    <property type="project" value="InterPro"/>
</dbReference>
<dbReference type="GO" id="GO:0008203">
    <property type="term" value="P:cholesterol metabolic process"/>
    <property type="evidence" value="ECO:0000314"/>
    <property type="project" value="UniProtKB"/>
</dbReference>
<dbReference type="InterPro" id="IPR004299">
    <property type="entry name" value="MBOAT_fam"/>
</dbReference>
<dbReference type="InterPro" id="IPR014371">
    <property type="entry name" value="Oat_ACAT_DAG_ARE"/>
</dbReference>
<dbReference type="InterPro" id="IPR030687">
    <property type="entry name" value="Sterol_acyltranf_meta"/>
</dbReference>
<dbReference type="PANTHER" id="PTHR10408">
    <property type="entry name" value="STEROL O-ACYLTRANSFERASE"/>
    <property type="match status" value="1"/>
</dbReference>
<dbReference type="PANTHER" id="PTHR10408:SF6">
    <property type="entry name" value="STEROL O-ACYLTRANSFERASE 1"/>
    <property type="match status" value="1"/>
</dbReference>
<dbReference type="Pfam" id="PF03062">
    <property type="entry name" value="MBOAT"/>
    <property type="match status" value="1"/>
</dbReference>
<dbReference type="PIRSF" id="PIRSF000439">
    <property type="entry name" value="Oat_ACAT_DAG_ARE"/>
    <property type="match status" value="1"/>
</dbReference>
<dbReference type="PIRSF" id="PIRSF500230">
    <property type="entry name" value="Sterol_acyltranf_ACAT"/>
    <property type="match status" value="1"/>
</dbReference>